<gene>
    <name type="primary">OR10A2</name>
    <name type="synonym">OR10A2P</name>
</gene>
<comment type="function">
    <text evidence="6">Odorant receptor.</text>
</comment>
<comment type="subcellular location">
    <subcellularLocation>
        <location>Cell membrane</location>
        <topology>Multi-pass membrane protein</topology>
    </subcellularLocation>
</comment>
<comment type="similarity">
    <text evidence="2">Belongs to the G-protein coupled receptor 1 family.</text>
</comment>
<comment type="sequence caution" evidence="6">
    <conflict type="erroneous initiation">
        <sequence resource="EMBL-CDS" id="AAG45207"/>
    </conflict>
</comment>
<comment type="online information" name="Human Olfactory Receptor Data Exploratorium (HORDE)">
    <link uri="http://genome.weizmann.ac.il/horde/card/index/symbol:OR10A2"/>
</comment>
<proteinExistence type="evidence at transcript level"/>
<reference key="1">
    <citation type="journal article" date="2001" name="Proc. Natl. Acad. Sci. U.S.A.">
        <title>Genomic analysis of orthologous mouse and human olfactory receptor loci.</title>
        <authorList>
            <person name="Lane R.P."/>
            <person name="Cutforth T."/>
            <person name="Young J."/>
            <person name="Athanasiou M."/>
            <person name="Friedman C."/>
            <person name="Rowen L."/>
            <person name="Evans G."/>
            <person name="Axel R."/>
            <person name="Hood L."/>
            <person name="Trask B.J."/>
        </authorList>
    </citation>
    <scope>NUCLEOTIDE SEQUENCE [GENOMIC DNA]</scope>
    <scope>VARIANT THR-134</scope>
</reference>
<reference key="2">
    <citation type="journal article" date="2006" name="Nature">
        <title>Human chromosome 11 DNA sequence and analysis including novel gene identification.</title>
        <authorList>
            <person name="Taylor T.D."/>
            <person name="Noguchi H."/>
            <person name="Totoki Y."/>
            <person name="Toyoda A."/>
            <person name="Kuroki Y."/>
            <person name="Dewar K."/>
            <person name="Lloyd C."/>
            <person name="Itoh T."/>
            <person name="Takeda T."/>
            <person name="Kim D.-W."/>
            <person name="She X."/>
            <person name="Barlow K.F."/>
            <person name="Bloom T."/>
            <person name="Bruford E."/>
            <person name="Chang J.L."/>
            <person name="Cuomo C.A."/>
            <person name="Eichler E."/>
            <person name="FitzGerald M.G."/>
            <person name="Jaffe D.B."/>
            <person name="LaButti K."/>
            <person name="Nicol R."/>
            <person name="Park H.-S."/>
            <person name="Seaman C."/>
            <person name="Sougnez C."/>
            <person name="Yang X."/>
            <person name="Zimmer A.R."/>
            <person name="Zody M.C."/>
            <person name="Birren B.W."/>
            <person name="Nusbaum C."/>
            <person name="Fujiyama A."/>
            <person name="Hattori M."/>
            <person name="Rogers J."/>
            <person name="Lander E.S."/>
            <person name="Sakaki Y."/>
        </authorList>
    </citation>
    <scope>NUCLEOTIDE SEQUENCE [LARGE SCALE GENOMIC DNA]</scope>
</reference>
<reference key="3">
    <citation type="journal article" date="2004" name="Genome Res.">
        <title>The status, quality, and expansion of the NIH full-length cDNA project: the Mammalian Gene Collection (MGC).</title>
        <authorList>
            <consortium name="The MGC Project Team"/>
        </authorList>
    </citation>
    <scope>NUCLEOTIDE SEQUENCE [LARGE SCALE MRNA]</scope>
    <scope>VARIANT THR-134</scope>
</reference>
<reference key="4">
    <citation type="journal article" date="2002" name="Genomics">
        <title>DEFOG: a practical scheme for deciphering families of genes.</title>
        <authorList>
            <person name="Fuchs T."/>
            <person name="Malecova B."/>
            <person name="Linhart C."/>
            <person name="Sharan R."/>
            <person name="Khen M."/>
            <person name="Herwig R."/>
            <person name="Shmulevich D."/>
            <person name="Elkon R."/>
            <person name="Steinfath M."/>
            <person name="O'Brien J.K."/>
            <person name="Radelof U."/>
            <person name="Lehrach H."/>
            <person name="Lancet D."/>
            <person name="Shamir R."/>
        </authorList>
    </citation>
    <scope>NUCLEOTIDE SEQUENCE [GENOMIC DNA] OF 55-270</scope>
    <scope>VARIANT ARG-207</scope>
</reference>
<reference key="5">
    <citation type="journal article" date="2004" name="Proc. Natl. Acad. Sci. U.S.A.">
        <title>The human olfactory receptor gene family.</title>
        <authorList>
            <person name="Malnic B."/>
            <person name="Godfrey P.A."/>
            <person name="Buck L.B."/>
        </authorList>
    </citation>
    <scope>IDENTIFICATION</scope>
</reference>
<reference key="6">
    <citation type="journal article" date="2004" name="Proc. Natl. Acad. Sci. U.S.A.">
        <authorList>
            <person name="Malnic B."/>
            <person name="Godfrey P.A."/>
            <person name="Buck L.B."/>
        </authorList>
    </citation>
    <scope>ERRATUM OF PUBMED:14983052</scope>
</reference>
<keyword id="KW-1003">Cell membrane</keyword>
<keyword id="KW-1015">Disulfide bond</keyword>
<keyword id="KW-0297">G-protein coupled receptor</keyword>
<keyword id="KW-0472">Membrane</keyword>
<keyword id="KW-0552">Olfaction</keyword>
<keyword id="KW-0675">Receptor</keyword>
<keyword id="KW-1185">Reference proteome</keyword>
<keyword id="KW-0716">Sensory transduction</keyword>
<keyword id="KW-0807">Transducer</keyword>
<keyword id="KW-0812">Transmembrane</keyword>
<keyword id="KW-1133">Transmembrane helix</keyword>
<feature type="chain" id="PRO_0000261139" description="Olfactory receptor 10A2">
    <location>
        <begin position="1"/>
        <end position="303"/>
    </location>
</feature>
<feature type="topological domain" description="Extracellular" evidence="1">
    <location>
        <begin position="1"/>
        <end position="12"/>
    </location>
</feature>
<feature type="transmembrane region" description="Helical; Name=1" evidence="1">
    <location>
        <begin position="13"/>
        <end position="33"/>
    </location>
</feature>
<feature type="topological domain" description="Cytoplasmic" evidence="1">
    <location>
        <begin position="34"/>
        <end position="41"/>
    </location>
</feature>
<feature type="transmembrane region" description="Helical; Name=2" evidence="1">
    <location>
        <begin position="42"/>
        <end position="62"/>
    </location>
</feature>
<feature type="topological domain" description="Extracellular" evidence="1">
    <location>
        <begin position="63"/>
        <end position="86"/>
    </location>
</feature>
<feature type="transmembrane region" description="Helical; Name=3" evidence="1">
    <location>
        <begin position="87"/>
        <end position="107"/>
    </location>
</feature>
<feature type="topological domain" description="Cytoplasmic" evidence="1">
    <location>
        <begin position="108"/>
        <end position="126"/>
    </location>
</feature>
<feature type="transmembrane region" description="Helical; Name=4" evidence="1">
    <location>
        <begin position="127"/>
        <end position="147"/>
    </location>
</feature>
<feature type="topological domain" description="Extracellular" evidence="1">
    <location>
        <begin position="148"/>
        <end position="184"/>
    </location>
</feature>
<feature type="transmembrane region" description="Helical; Name=5" evidence="1">
    <location>
        <begin position="185"/>
        <end position="204"/>
    </location>
</feature>
<feature type="topological domain" description="Cytoplasmic" evidence="1">
    <location>
        <begin position="205"/>
        <end position="224"/>
    </location>
</feature>
<feature type="transmembrane region" description="Helical; Name=6" evidence="1">
    <location>
        <begin position="225"/>
        <end position="245"/>
    </location>
</feature>
<feature type="topological domain" description="Extracellular" evidence="1">
    <location>
        <begin position="246"/>
        <end position="258"/>
    </location>
</feature>
<feature type="transmembrane region" description="Helical; Name=7" evidence="1">
    <location>
        <begin position="259"/>
        <end position="279"/>
    </location>
</feature>
<feature type="topological domain" description="Cytoplasmic" evidence="1">
    <location>
        <begin position="280"/>
        <end position="301"/>
    </location>
</feature>
<feature type="disulfide bond" evidence="2">
    <location>
        <begin position="84"/>
        <end position="176"/>
    </location>
</feature>
<feature type="sequence variant" id="VAR_060022" description="In dbSNP:rs3930075.">
    <original>H</original>
    <variation>R</variation>
    <location>
        <position position="43"/>
    </location>
</feature>
<feature type="sequence variant" id="VAR_053261" description="In dbSNP:rs2741764." evidence="3 5">
    <original>A</original>
    <variation>T</variation>
    <location>
        <position position="134"/>
    </location>
</feature>
<feature type="sequence variant" id="VAR_034277" description="In dbSNP:rs10839631." evidence="4">
    <original>H</original>
    <variation>R</variation>
    <location>
        <position position="207"/>
    </location>
</feature>
<feature type="sequence variant" id="VAR_034278" description="In dbSNP:rs10839632.">
    <original>I</original>
    <variation>T</variation>
    <location>
        <position position="240"/>
    </location>
</feature>
<feature type="sequence variant" id="VAR_034279" description="In dbSNP:rs7926083.">
    <original>K</original>
    <variation>T</variation>
    <location>
        <position position="258"/>
    </location>
</feature>
<feature type="sequence conflict" description="In Ref. 4; AAK95109." evidence="6" ref="4">
    <original>R</original>
    <variation>K</variation>
    <location>
        <position position="173"/>
    </location>
</feature>
<feature type="sequence conflict" description="In Ref. 4; AAK95109." evidence="6" ref="4">
    <original>N</original>
    <variation>H</variation>
    <location>
        <position position="222"/>
    </location>
</feature>
<name>O10A2_HUMAN</name>
<sequence length="303" mass="33817">MSFSSLPTEIQSLLFLTFLTIYLVTLMGNCLIILVTLADPMLHSPMYFFLRNLSFLEIGFNLVIVPKMLGTLLAQDTTISFLGCATQMYFFFFFGVAECFLLATMAYDRYVAICSPLHYPVIMNQRTRAKLAAASWFPGFPVATVQTTWLFSFPFCGTNKVNHFFCDSPPVLRLVCADTALFEIYAIVGTILVVMIPCLLILCSYTHIAAAILKIPSAKGKNKAFSTCSSHLLVVSLFYISLSLTYFRPKSNNSPEGKKLLSLSYTVMTPMLNPIIYSLRNNEVKNALSRTVSKALALRNCIP</sequence>
<accession>Q9H208</accession>
<accession>B2RNL9</accession>
<accession>Q6IFG9</accession>
<evidence type="ECO:0000255" key="1"/>
<evidence type="ECO:0000255" key="2">
    <source>
        <dbReference type="PROSITE-ProRule" id="PRU00521"/>
    </source>
</evidence>
<evidence type="ECO:0000269" key="3">
    <source>
    </source>
</evidence>
<evidence type="ECO:0000269" key="4">
    <source>
    </source>
</evidence>
<evidence type="ECO:0000269" key="5">
    <source>
    </source>
</evidence>
<evidence type="ECO:0000305" key="6"/>
<organism>
    <name type="scientific">Homo sapiens</name>
    <name type="common">Human</name>
    <dbReference type="NCBI Taxonomy" id="9606"/>
    <lineage>
        <taxon>Eukaryota</taxon>
        <taxon>Metazoa</taxon>
        <taxon>Chordata</taxon>
        <taxon>Craniata</taxon>
        <taxon>Vertebrata</taxon>
        <taxon>Euteleostomi</taxon>
        <taxon>Mammalia</taxon>
        <taxon>Eutheria</taxon>
        <taxon>Euarchontoglires</taxon>
        <taxon>Primates</taxon>
        <taxon>Haplorrhini</taxon>
        <taxon>Catarrhini</taxon>
        <taxon>Hominidae</taxon>
        <taxon>Homo</taxon>
    </lineage>
</organism>
<dbReference type="EMBL" id="AF321237">
    <property type="protein sequence ID" value="AAG45207.1"/>
    <property type="status" value="ALT_INIT"/>
    <property type="molecule type" value="Genomic_DNA"/>
</dbReference>
<dbReference type="EMBL" id="AC017103">
    <property type="status" value="NOT_ANNOTATED_CDS"/>
    <property type="molecule type" value="Genomic_DNA"/>
</dbReference>
<dbReference type="EMBL" id="BC136955">
    <property type="protein sequence ID" value="AAI36956.1"/>
    <property type="molecule type" value="mRNA"/>
</dbReference>
<dbReference type="EMBL" id="AF399624">
    <property type="protein sequence ID" value="AAK95109.1"/>
    <property type="molecule type" value="Genomic_DNA"/>
</dbReference>
<dbReference type="EMBL" id="BK004293">
    <property type="protein sequence ID" value="DAA04691.1"/>
    <property type="molecule type" value="Genomic_DNA"/>
</dbReference>
<dbReference type="CCDS" id="CCDS31415.1"/>
<dbReference type="RefSeq" id="NP_001004460.1">
    <property type="nucleotide sequence ID" value="NM_001004460.2"/>
</dbReference>
<dbReference type="SMR" id="Q9H208"/>
<dbReference type="FunCoup" id="Q9H208">
    <property type="interactions" value="460"/>
</dbReference>
<dbReference type="STRING" id="9606.ENSP00000493131"/>
<dbReference type="iPTMnet" id="Q9H208"/>
<dbReference type="PhosphoSitePlus" id="Q9H208"/>
<dbReference type="BioMuta" id="OR10A2"/>
<dbReference type="DMDM" id="118573088"/>
<dbReference type="MassIVE" id="Q9H208"/>
<dbReference type="PaxDb" id="9606-ENSP00000303862"/>
<dbReference type="TopDownProteomics" id="Q9H208"/>
<dbReference type="Antibodypedia" id="56602">
    <property type="antibodies" value="40 antibodies from 9 providers"/>
</dbReference>
<dbReference type="DNASU" id="341276"/>
<dbReference type="Ensembl" id="ENST00000641461.1">
    <property type="protein sequence ID" value="ENSP00000493131.1"/>
    <property type="gene ID" value="ENSG00000170790.6"/>
</dbReference>
<dbReference type="GeneID" id="341276"/>
<dbReference type="KEGG" id="hsa:341276"/>
<dbReference type="MANE-Select" id="ENST00000641461.1">
    <property type="protein sequence ID" value="ENSP00000493131.1"/>
    <property type="RefSeq nucleotide sequence ID" value="NM_001004460.2"/>
    <property type="RefSeq protein sequence ID" value="NP_001004460.1"/>
</dbReference>
<dbReference type="UCSC" id="uc001meu.2">
    <property type="organism name" value="human"/>
</dbReference>
<dbReference type="AGR" id="HGNC:8161"/>
<dbReference type="CTD" id="341276"/>
<dbReference type="DisGeNET" id="341276"/>
<dbReference type="GeneCards" id="OR10A2"/>
<dbReference type="HGNC" id="HGNC:8161">
    <property type="gene designation" value="OR10A2"/>
</dbReference>
<dbReference type="HPA" id="ENSG00000170790">
    <property type="expression patterns" value="Not detected"/>
</dbReference>
<dbReference type="neXtProt" id="NX_Q9H208"/>
<dbReference type="PharmGKB" id="PA31950"/>
<dbReference type="VEuPathDB" id="HostDB:ENSG00000170790"/>
<dbReference type="eggNOG" id="ENOG502QVH7">
    <property type="taxonomic scope" value="Eukaryota"/>
</dbReference>
<dbReference type="GeneTree" id="ENSGT01120000271813"/>
<dbReference type="HOGENOM" id="CLU_012526_1_0_1"/>
<dbReference type="InParanoid" id="Q9H208"/>
<dbReference type="OMA" id="PFCRTNK"/>
<dbReference type="OrthoDB" id="9975554at2759"/>
<dbReference type="PAN-GO" id="Q9H208">
    <property type="GO annotations" value="1 GO annotation based on evolutionary models"/>
</dbReference>
<dbReference type="PhylomeDB" id="Q9H208"/>
<dbReference type="TreeFam" id="TF337350"/>
<dbReference type="PathwayCommons" id="Q9H208"/>
<dbReference type="Reactome" id="R-HSA-9752946">
    <property type="pathway name" value="Expression and translocation of olfactory receptors"/>
</dbReference>
<dbReference type="BioGRID-ORCS" id="341276">
    <property type="hits" value="3 hits in 706 CRISPR screens"/>
</dbReference>
<dbReference type="GenomeRNAi" id="341276"/>
<dbReference type="Pharos" id="Q9H208">
    <property type="development level" value="Tdark"/>
</dbReference>
<dbReference type="PRO" id="PR:Q9H208"/>
<dbReference type="Proteomes" id="UP000005640">
    <property type="component" value="Chromosome 11"/>
</dbReference>
<dbReference type="RNAct" id="Q9H208">
    <property type="molecule type" value="protein"/>
</dbReference>
<dbReference type="Bgee" id="ENSG00000170790">
    <property type="expression patterns" value="Expressed in male germ line stem cell (sensu Vertebrata) in testis and 3 other cell types or tissues"/>
</dbReference>
<dbReference type="GO" id="GO:0005886">
    <property type="term" value="C:plasma membrane"/>
    <property type="evidence" value="ECO:0000318"/>
    <property type="project" value="GO_Central"/>
</dbReference>
<dbReference type="GO" id="GO:0004930">
    <property type="term" value="F:G protein-coupled receptor activity"/>
    <property type="evidence" value="ECO:0007669"/>
    <property type="project" value="UniProtKB-KW"/>
</dbReference>
<dbReference type="GO" id="GO:0004984">
    <property type="term" value="F:olfactory receptor activity"/>
    <property type="evidence" value="ECO:0000318"/>
    <property type="project" value="GO_Central"/>
</dbReference>
<dbReference type="GO" id="GO:0050911">
    <property type="term" value="P:detection of chemical stimulus involved in sensory perception of smell"/>
    <property type="evidence" value="ECO:0000318"/>
    <property type="project" value="GO_Central"/>
</dbReference>
<dbReference type="CDD" id="cd15225">
    <property type="entry name" value="7tmA_OR10A-like"/>
    <property type="match status" value="1"/>
</dbReference>
<dbReference type="FunFam" id="1.10.1220.70:FF:000001">
    <property type="entry name" value="Olfactory receptor"/>
    <property type="match status" value="1"/>
</dbReference>
<dbReference type="FunFam" id="1.20.1070.10:FF:000001">
    <property type="entry name" value="Olfactory receptor"/>
    <property type="match status" value="1"/>
</dbReference>
<dbReference type="Gene3D" id="1.20.1070.10">
    <property type="entry name" value="Rhodopsin 7-helix transmembrane proteins"/>
    <property type="match status" value="1"/>
</dbReference>
<dbReference type="InterPro" id="IPR000276">
    <property type="entry name" value="GPCR_Rhodpsn"/>
</dbReference>
<dbReference type="InterPro" id="IPR017452">
    <property type="entry name" value="GPCR_Rhodpsn_7TM"/>
</dbReference>
<dbReference type="InterPro" id="IPR000725">
    <property type="entry name" value="Olfact_rcpt"/>
</dbReference>
<dbReference type="PANTHER" id="PTHR26453">
    <property type="entry name" value="OLFACTORY RECEPTOR"/>
    <property type="match status" value="1"/>
</dbReference>
<dbReference type="Pfam" id="PF13853">
    <property type="entry name" value="7tm_4"/>
    <property type="match status" value="1"/>
</dbReference>
<dbReference type="PRINTS" id="PR00237">
    <property type="entry name" value="GPCRRHODOPSN"/>
</dbReference>
<dbReference type="PRINTS" id="PR00245">
    <property type="entry name" value="OLFACTORYR"/>
</dbReference>
<dbReference type="SUPFAM" id="SSF81321">
    <property type="entry name" value="Family A G protein-coupled receptor-like"/>
    <property type="match status" value="1"/>
</dbReference>
<dbReference type="PROSITE" id="PS00237">
    <property type="entry name" value="G_PROTEIN_RECEP_F1_1"/>
    <property type="match status" value="1"/>
</dbReference>
<dbReference type="PROSITE" id="PS50262">
    <property type="entry name" value="G_PROTEIN_RECEP_F1_2"/>
    <property type="match status" value="1"/>
</dbReference>
<protein>
    <recommendedName>
        <fullName>Olfactory receptor 10A2</fullName>
    </recommendedName>
    <alternativeName>
        <fullName>HP4</fullName>
    </alternativeName>
    <alternativeName>
        <fullName>Olfactory receptor OR11-86</fullName>
    </alternativeName>
</protein>